<feature type="chain" id="PRO_0000414021" description="Outer envelope protein 61">
    <location>
        <begin position="1"/>
        <end position="554"/>
    </location>
</feature>
<feature type="topological domain" description="Cytoplasmic" evidence="3">
    <location>
        <begin position="1"/>
        <end position="525"/>
    </location>
</feature>
<feature type="transmembrane region" description="Helical" evidence="1">
    <location>
        <begin position="526"/>
        <end position="546"/>
    </location>
</feature>
<feature type="topological domain" description="Lumenal" evidence="1">
    <location>
        <begin position="547"/>
        <end position="554"/>
    </location>
</feature>
<feature type="repeat" description="TPR 1">
    <location>
        <begin position="103"/>
        <end position="136"/>
    </location>
</feature>
<feature type="repeat" description="TPR 2">
    <location>
        <begin position="180"/>
        <end position="213"/>
    </location>
</feature>
<feature type="region of interest" description="Disordered" evidence="2">
    <location>
        <begin position="245"/>
        <end position="269"/>
    </location>
</feature>
<feature type="region of interest" description="Disordered" evidence="2">
    <location>
        <begin position="395"/>
        <end position="439"/>
    </location>
</feature>
<feature type="compositionally biased region" description="Basic and acidic residues" evidence="2">
    <location>
        <begin position="254"/>
        <end position="263"/>
    </location>
</feature>
<feature type="compositionally biased region" description="Low complexity" evidence="2">
    <location>
        <begin position="412"/>
        <end position="423"/>
    </location>
</feature>
<feature type="mutagenesis site" description="Weak binding to HSP70-1 and HSP90-2." evidence="4">
    <original>K</original>
    <variation>E</variation>
    <location>
        <position position="181"/>
    </location>
</feature>
<feature type="mutagenesis site" description="Loss of binding to HSP70-1." evidence="3">
    <original>R</original>
    <variation>A</variation>
    <location>
        <position position="185"/>
    </location>
</feature>
<feature type="sequence conflict" description="In Ref. 3; BAC43348." evidence="5" ref="3">
    <original>N</original>
    <variation>K</variation>
    <location>
        <position position="248"/>
    </location>
</feature>
<protein>
    <recommendedName>
        <fullName>Outer envelope protein 61</fullName>
    </recommendedName>
    <alternativeName>
        <fullName>Tetratricopeptide repeat domain-containing protein 7</fullName>
    </alternativeName>
</protein>
<name>OEP61_ARATH</name>
<organism>
    <name type="scientific">Arabidopsis thaliana</name>
    <name type="common">Mouse-ear cress</name>
    <dbReference type="NCBI Taxonomy" id="3702"/>
    <lineage>
        <taxon>Eukaryota</taxon>
        <taxon>Viridiplantae</taxon>
        <taxon>Streptophyta</taxon>
        <taxon>Embryophyta</taxon>
        <taxon>Tracheophyta</taxon>
        <taxon>Spermatophyta</taxon>
        <taxon>Magnoliopsida</taxon>
        <taxon>eudicotyledons</taxon>
        <taxon>Gunneridae</taxon>
        <taxon>Pentapetalae</taxon>
        <taxon>rosids</taxon>
        <taxon>malvids</taxon>
        <taxon>Brassicales</taxon>
        <taxon>Brassicaceae</taxon>
        <taxon>Camelineae</taxon>
        <taxon>Arabidopsis</taxon>
    </lineage>
</organism>
<reference key="1">
    <citation type="journal article" date="2000" name="Nature">
        <title>Sequence and analysis of chromosome 5 of the plant Arabidopsis thaliana.</title>
        <authorList>
            <person name="Tabata S."/>
            <person name="Kaneko T."/>
            <person name="Nakamura Y."/>
            <person name="Kotani H."/>
            <person name="Kato T."/>
            <person name="Asamizu E."/>
            <person name="Miyajima N."/>
            <person name="Sasamoto S."/>
            <person name="Kimura T."/>
            <person name="Hosouchi T."/>
            <person name="Kawashima K."/>
            <person name="Kohara M."/>
            <person name="Matsumoto M."/>
            <person name="Matsuno A."/>
            <person name="Muraki A."/>
            <person name="Nakayama S."/>
            <person name="Nakazaki N."/>
            <person name="Naruo K."/>
            <person name="Okumura S."/>
            <person name="Shinpo S."/>
            <person name="Takeuchi C."/>
            <person name="Wada T."/>
            <person name="Watanabe A."/>
            <person name="Yamada M."/>
            <person name="Yasuda M."/>
            <person name="Sato S."/>
            <person name="de la Bastide M."/>
            <person name="Huang E."/>
            <person name="Spiegel L."/>
            <person name="Gnoj L."/>
            <person name="O'Shaughnessy A."/>
            <person name="Preston R."/>
            <person name="Habermann K."/>
            <person name="Murray J."/>
            <person name="Johnson D."/>
            <person name="Rohlfing T."/>
            <person name="Nelson J."/>
            <person name="Stoneking T."/>
            <person name="Pepin K."/>
            <person name="Spieth J."/>
            <person name="Sekhon M."/>
            <person name="Armstrong J."/>
            <person name="Becker M."/>
            <person name="Belter E."/>
            <person name="Cordum H."/>
            <person name="Cordes M."/>
            <person name="Courtney L."/>
            <person name="Courtney W."/>
            <person name="Dante M."/>
            <person name="Du H."/>
            <person name="Edwards J."/>
            <person name="Fryman J."/>
            <person name="Haakensen B."/>
            <person name="Lamar E."/>
            <person name="Latreille P."/>
            <person name="Leonard S."/>
            <person name="Meyer R."/>
            <person name="Mulvaney E."/>
            <person name="Ozersky P."/>
            <person name="Riley A."/>
            <person name="Strowmatt C."/>
            <person name="Wagner-McPherson C."/>
            <person name="Wollam A."/>
            <person name="Yoakum M."/>
            <person name="Bell M."/>
            <person name="Dedhia N."/>
            <person name="Parnell L."/>
            <person name="Shah R."/>
            <person name="Rodriguez M."/>
            <person name="Hoon See L."/>
            <person name="Vil D."/>
            <person name="Baker J."/>
            <person name="Kirchoff K."/>
            <person name="Toth K."/>
            <person name="King L."/>
            <person name="Bahret A."/>
            <person name="Miller B."/>
            <person name="Marra M.A."/>
            <person name="Martienssen R."/>
            <person name="McCombie W.R."/>
            <person name="Wilson R.K."/>
            <person name="Murphy G."/>
            <person name="Bancroft I."/>
            <person name="Volckaert G."/>
            <person name="Wambutt R."/>
            <person name="Duesterhoeft A."/>
            <person name="Stiekema W."/>
            <person name="Pohl T."/>
            <person name="Entian K.-D."/>
            <person name="Terryn N."/>
            <person name="Hartley N."/>
            <person name="Bent E."/>
            <person name="Johnson S."/>
            <person name="Langham S.-A."/>
            <person name="McCullagh B."/>
            <person name="Robben J."/>
            <person name="Grymonprez B."/>
            <person name="Zimmermann W."/>
            <person name="Ramsperger U."/>
            <person name="Wedler H."/>
            <person name="Balke K."/>
            <person name="Wedler E."/>
            <person name="Peters S."/>
            <person name="van Staveren M."/>
            <person name="Dirkse W."/>
            <person name="Mooijman P."/>
            <person name="Klein Lankhorst R."/>
            <person name="Weitzenegger T."/>
            <person name="Bothe G."/>
            <person name="Rose M."/>
            <person name="Hauf J."/>
            <person name="Berneiser S."/>
            <person name="Hempel S."/>
            <person name="Feldpausch M."/>
            <person name="Lamberth S."/>
            <person name="Villarroel R."/>
            <person name="Gielen J."/>
            <person name="Ardiles W."/>
            <person name="Bents O."/>
            <person name="Lemcke K."/>
            <person name="Kolesov G."/>
            <person name="Mayer K.F.X."/>
            <person name="Rudd S."/>
            <person name="Schoof H."/>
            <person name="Schueller C."/>
            <person name="Zaccaria P."/>
            <person name="Mewes H.-W."/>
            <person name="Bevan M."/>
            <person name="Fransz P.F."/>
        </authorList>
    </citation>
    <scope>NUCLEOTIDE SEQUENCE [LARGE SCALE GENOMIC DNA]</scope>
    <source>
        <strain>cv. Columbia</strain>
    </source>
</reference>
<reference key="2">
    <citation type="journal article" date="2017" name="Plant J.">
        <title>Araport11: a complete reannotation of the Arabidopsis thaliana reference genome.</title>
        <authorList>
            <person name="Cheng C.Y."/>
            <person name="Krishnakumar V."/>
            <person name="Chan A.P."/>
            <person name="Thibaud-Nissen F."/>
            <person name="Schobel S."/>
            <person name="Town C.D."/>
        </authorList>
    </citation>
    <scope>GENOME REANNOTATION</scope>
    <source>
        <strain>cv. Columbia</strain>
    </source>
</reference>
<reference key="3">
    <citation type="journal article" date="2002" name="Science">
        <title>Functional annotation of a full-length Arabidopsis cDNA collection.</title>
        <authorList>
            <person name="Seki M."/>
            <person name="Narusaka M."/>
            <person name="Kamiya A."/>
            <person name="Ishida J."/>
            <person name="Satou M."/>
            <person name="Sakurai T."/>
            <person name="Nakajima M."/>
            <person name="Enju A."/>
            <person name="Akiyama K."/>
            <person name="Oono Y."/>
            <person name="Muramatsu M."/>
            <person name="Hayashizaki Y."/>
            <person name="Kawai J."/>
            <person name="Carninci P."/>
            <person name="Itoh M."/>
            <person name="Ishii Y."/>
            <person name="Arakawa T."/>
            <person name="Shibata K."/>
            <person name="Shinagawa A."/>
            <person name="Shinozaki K."/>
        </authorList>
    </citation>
    <scope>NUCLEOTIDE SEQUENCE [LARGE SCALE MRNA]</scope>
    <source>
        <strain>cv. Columbia</strain>
    </source>
</reference>
<reference key="4">
    <citation type="submission" date="2009-01" db="EMBL/GenBank/DDBJ databases">
        <title>Arabidopsis ORF clones.</title>
        <authorList>
            <person name="De Los Reyes C."/>
            <person name="Quan R."/>
            <person name="Chen H."/>
            <person name="Bautista V.R."/>
            <person name="Kim C.J."/>
            <person name="Ecker J.R."/>
        </authorList>
    </citation>
    <scope>NUCLEOTIDE SEQUENCE [LARGE SCALE MRNA]</scope>
    <source>
        <strain>cv. Columbia</strain>
    </source>
</reference>
<reference key="5">
    <citation type="journal article" date="2010" name="PLoS ONE">
        <title>In silico identification of carboxylate clamp type tetratricopeptide repeat proteins in Arabidopsis and rice as putative co-chaperones of Hsp90/Hsp70.</title>
        <authorList>
            <person name="Prasad B.D."/>
            <person name="Goel S."/>
            <person name="Krishna P."/>
        </authorList>
    </citation>
    <scope>IDENTIFICATION</scope>
</reference>
<reference key="6">
    <citation type="journal article" date="2011" name="Biochem. J.">
        <title>OEP61 is a chaperone receptor at the plastid outer envelope.</title>
        <authorList>
            <person name="von Loeffelholz O."/>
            <person name="Kriechbaumer V."/>
            <person name="Ewan R.A."/>
            <person name="Jonczyk R."/>
            <person name="Lehmann S."/>
            <person name="Young J.C."/>
            <person name="Abell B.M."/>
        </authorList>
    </citation>
    <scope>FUNCTION</scope>
    <scope>MUTAGENESIS OF ARG-185</scope>
    <scope>TISSUE SPECIFICITY</scope>
    <scope>SUBCELLULAR LOCATION</scope>
    <scope>TOPOLOGY</scope>
    <scope>INTERACTION WITH HSP70-1 AND HSP90-2</scope>
</reference>
<reference key="7">
    <citation type="journal article" date="2012" name="J. Cell Sci.">
        <title>AtTPR7 is a chaperone-docking protein of the Sec translocon in Arabidopsis.</title>
        <authorList>
            <person name="Schweiger R."/>
            <person name="Muller N.C."/>
            <person name="Schmitt M.J."/>
            <person name="Soll J."/>
            <person name="Schwenkert S."/>
        </authorList>
    </citation>
    <scope>FUNCTION</scope>
    <scope>INTERACTION WITH HSP70-1; HSP90-1; HSP90-2; HSP90-3; HSP90-4; ERDJ2A AND ERDJ2B</scope>
    <scope>SUBCELLULAR LOCATION</scope>
    <scope>MUTAGENESIS OF LYS-181</scope>
</reference>
<keyword id="KW-0150">Chloroplast</keyword>
<keyword id="KW-0256">Endoplasmic reticulum</keyword>
<keyword id="KW-0472">Membrane</keyword>
<keyword id="KW-0934">Plastid</keyword>
<keyword id="KW-1002">Plastid outer membrane</keyword>
<keyword id="KW-0653">Protein transport</keyword>
<keyword id="KW-1185">Reference proteome</keyword>
<keyword id="KW-0677">Repeat</keyword>
<keyword id="KW-0802">TPR repeat</keyword>
<keyword id="KW-0812">Transmembrane</keyword>
<keyword id="KW-1133">Transmembrane helix</keyword>
<keyword id="KW-0813">Transport</keyword>
<sequence>MFNGLMDPEMIRLAQDQMSRMTPADFARIQQQMMSNPDLMNMATESMKNMRPEDLKQAAEQLKHTRPEDMAEISEKMAKASPEDIAAMRAHADAQFTYQINAAQMLKKQGNELHSRGNFSDAAEKYLRAKNNLKEIPSSKGGAILLACSLNLMSCYLKTNQHEECIKEGSEVLGYDARNVKALYRRGQAYRDLGLFEDAVSDLSKAHEVSPEDETIADVLRDVKERLAVEGPGKASRGVVIEDITEENNVTSGENKKPSKEANGHAQGVKTDVDGLQALRDNPEAIRTFQNFISKTDPDTLAALSGGKAGDMSPDMFKTASSMIGKMSPEEIQKMVQTASSFKGDNPFAPTAPSTENGFTPTPDMLKLASDMMGKMSPEERERMFNMASSLKANAPASTSYGNAEASEPRESLGASGSSSGNSFVAPRSGFEPSIPSAPPADLQEQMRNQMKDPAMRQMFTSMIKNMNPEMMASMSEQFGMKLSQEDAAKAQQAMASLSPDALEKMMRWADRAQTGMEKAKKAKKWLFGKGGLIFAILMLVLAMVLHRLGYIGN</sequence>
<evidence type="ECO:0000255" key="1"/>
<evidence type="ECO:0000256" key="2">
    <source>
        <dbReference type="SAM" id="MobiDB-lite"/>
    </source>
</evidence>
<evidence type="ECO:0000269" key="3">
    <source>
    </source>
</evidence>
<evidence type="ECO:0000269" key="4">
    <source>
    </source>
</evidence>
<evidence type="ECO:0000305" key="5"/>
<proteinExistence type="evidence at protein level"/>
<comment type="function">
    <text evidence="3 4">Plays a role in protein import into the endoplasmic reticulum (ER). May function as chaperone docking protein during post-translational protein translocation into the ER. Chaperone receptor mediating Hsp70-dependent protein targeting to chloroplasts. Interacts specifically with some chloroplast precursors, but not with mitochondrial precursors. Able to select precursors for delivery to the chloroplast translocase independently of Hsp70.</text>
</comment>
<comment type="subunit">
    <text evidence="3 4">Interacts (via TPR region) with HSP70-1, but not with HSP90-2. Interacts with ERDJ2A and ERDJ2B. In the ER membrane, associates with ERDJ2 in membrane complexes of 140 and 200 kDa and specifically interacts with the HSP70 and HSP90 chaperones via its TPR domain.</text>
</comment>
<comment type="subcellular location">
    <subcellularLocation>
        <location evidence="5">Endoplasmic reticulum membrane</location>
        <topology evidence="5">Single-pass membrane protein</topology>
    </subcellularLocation>
    <subcellularLocation>
        <location evidence="5">Plastid</location>
        <location evidence="5">Chloroplast outer membrane</location>
        <topology evidence="5">Single-pass membrane protein</topology>
    </subcellularLocation>
    <text>Resides most likely exclusively in the ER membrane.</text>
</comment>
<comment type="tissue specificity">
    <text evidence="3">Ubiquitous. Highest expression in leaves and lowest in roots.</text>
</comment>
<comment type="domain">
    <text>The TPR region (103-213) is necessary for interaction with HSP70-1 while the linker domain (214-530) facilitates selective recognition of chloroplast precursor complexes.</text>
</comment>
<comment type="sequence caution" evidence="5">
    <conflict type="erroneous initiation">
        <sequence resource="EMBL-CDS" id="CAC34492"/>
    </conflict>
    <text>Truncated N-terminus.</text>
</comment>
<gene>
    <name type="primary">OEP61</name>
    <name type="synonym">TPR7</name>
    <name type="ordered locus">At5g21990</name>
    <name type="ORF">T6G21.100</name>
</gene>
<dbReference type="EMBL" id="AL589883">
    <property type="protein sequence ID" value="CAC34492.1"/>
    <property type="status" value="ALT_INIT"/>
    <property type="molecule type" value="Genomic_DNA"/>
</dbReference>
<dbReference type="EMBL" id="CP002688">
    <property type="protein sequence ID" value="AED92964.1"/>
    <property type="molecule type" value="Genomic_DNA"/>
</dbReference>
<dbReference type="EMBL" id="AK118755">
    <property type="protein sequence ID" value="BAC43348.1"/>
    <property type="molecule type" value="mRNA"/>
</dbReference>
<dbReference type="EMBL" id="BT053758">
    <property type="protein sequence ID" value="ACL13985.1"/>
    <property type="molecule type" value="mRNA"/>
</dbReference>
<dbReference type="RefSeq" id="NP_680187.2">
    <property type="nucleotide sequence ID" value="NM_147882.3"/>
</dbReference>
<dbReference type="SMR" id="B7ZWR6"/>
<dbReference type="BioGRID" id="17534">
    <property type="interactions" value="13"/>
</dbReference>
<dbReference type="FunCoup" id="B7ZWR6">
    <property type="interactions" value="2543"/>
</dbReference>
<dbReference type="IntAct" id="B7ZWR6">
    <property type="interactions" value="1"/>
</dbReference>
<dbReference type="MINT" id="B7ZWR6"/>
<dbReference type="STRING" id="3702.B7ZWR6"/>
<dbReference type="GlyGen" id="B7ZWR6">
    <property type="glycosylation" value="1 site"/>
</dbReference>
<dbReference type="iPTMnet" id="B7ZWR6"/>
<dbReference type="PaxDb" id="3702-AT5G21990.1"/>
<dbReference type="ProteomicsDB" id="239018"/>
<dbReference type="EnsemblPlants" id="AT5G21990.1">
    <property type="protein sequence ID" value="AT5G21990.1"/>
    <property type="gene ID" value="AT5G21990"/>
</dbReference>
<dbReference type="GeneID" id="832259"/>
<dbReference type="Gramene" id="AT5G21990.1">
    <property type="protein sequence ID" value="AT5G21990.1"/>
    <property type="gene ID" value="AT5G21990"/>
</dbReference>
<dbReference type="KEGG" id="ath:AT5G21990"/>
<dbReference type="Araport" id="AT5G21990"/>
<dbReference type="TAIR" id="AT5G21990">
    <property type="gene designation" value="TPR7"/>
</dbReference>
<dbReference type="eggNOG" id="KOG0543">
    <property type="taxonomic scope" value="Eukaryota"/>
</dbReference>
<dbReference type="HOGENOM" id="CLU_024599_1_0_1"/>
<dbReference type="InParanoid" id="B7ZWR6"/>
<dbReference type="OMA" id="RWADKIQ"/>
<dbReference type="OrthoDB" id="245563at2759"/>
<dbReference type="PhylomeDB" id="B7ZWR6"/>
<dbReference type="PRO" id="PR:B7ZWR6"/>
<dbReference type="Proteomes" id="UP000006548">
    <property type="component" value="Chromosome 5"/>
</dbReference>
<dbReference type="ExpressionAtlas" id="B7ZWR6">
    <property type="expression patterns" value="baseline and differential"/>
</dbReference>
<dbReference type="GO" id="GO:0009707">
    <property type="term" value="C:chloroplast outer membrane"/>
    <property type="evidence" value="ECO:0000314"/>
    <property type="project" value="TAIR"/>
</dbReference>
<dbReference type="GO" id="GO:0005789">
    <property type="term" value="C:endoplasmic reticulum membrane"/>
    <property type="evidence" value="ECO:0000314"/>
    <property type="project" value="TAIR"/>
</dbReference>
<dbReference type="GO" id="GO:0009536">
    <property type="term" value="C:plastid"/>
    <property type="evidence" value="ECO:0007005"/>
    <property type="project" value="TAIR"/>
</dbReference>
<dbReference type="GO" id="GO:0046967">
    <property type="term" value="P:cytosol to endoplasmic reticulum transport"/>
    <property type="evidence" value="ECO:0000316"/>
    <property type="project" value="TAIR"/>
</dbReference>
<dbReference type="GO" id="GO:0015031">
    <property type="term" value="P:protein transport"/>
    <property type="evidence" value="ECO:0007669"/>
    <property type="project" value="UniProtKB-KW"/>
</dbReference>
<dbReference type="FunFam" id="1.25.40.10:FF:000905">
    <property type="entry name" value="Outer envelope protein 61"/>
    <property type="match status" value="1"/>
</dbReference>
<dbReference type="Gene3D" id="1.25.40.10">
    <property type="entry name" value="Tetratricopeptide repeat domain"/>
    <property type="match status" value="1"/>
</dbReference>
<dbReference type="InterPro" id="IPR053319">
    <property type="entry name" value="OEP61"/>
</dbReference>
<dbReference type="InterPro" id="IPR011990">
    <property type="entry name" value="TPR-like_helical_dom_sf"/>
</dbReference>
<dbReference type="InterPro" id="IPR019734">
    <property type="entry name" value="TPR_rpt"/>
</dbReference>
<dbReference type="PANTHER" id="PTHR48433">
    <property type="entry name" value="OUTER ENVELOPE PROTEIN 61-LIKE"/>
    <property type="match status" value="1"/>
</dbReference>
<dbReference type="PANTHER" id="PTHR48433:SF2">
    <property type="entry name" value="STI1 DOMAIN-CONTAINING PROTEIN"/>
    <property type="match status" value="1"/>
</dbReference>
<dbReference type="Pfam" id="PF00515">
    <property type="entry name" value="TPR_1"/>
    <property type="match status" value="1"/>
</dbReference>
<dbReference type="SMART" id="SM00028">
    <property type="entry name" value="TPR"/>
    <property type="match status" value="3"/>
</dbReference>
<dbReference type="SUPFAM" id="SSF48452">
    <property type="entry name" value="TPR-like"/>
    <property type="match status" value="1"/>
</dbReference>
<dbReference type="PROSITE" id="PS50005">
    <property type="entry name" value="TPR"/>
    <property type="match status" value="2"/>
</dbReference>
<dbReference type="PROSITE" id="PS50293">
    <property type="entry name" value="TPR_REGION"/>
    <property type="match status" value="1"/>
</dbReference>
<accession>B7ZWR6</accession>
<accession>Q8GWM6</accession>
<accession>Q9C588</accession>